<comment type="function">
    <text evidence="1">Catalyzes the reversible aldol cleavage of N-acetylneuraminic acid (sialic acid; Neu5Ac) to form pyruvate and N-acetylmannosamine (ManNAc) via a Schiff base intermediate.</text>
</comment>
<comment type="catalytic activity">
    <reaction evidence="1">
        <text>aceneuramate = aldehydo-N-acetyl-D-mannosamine + pyruvate</text>
        <dbReference type="Rhea" id="RHEA:23296"/>
        <dbReference type="ChEBI" id="CHEBI:15361"/>
        <dbReference type="ChEBI" id="CHEBI:17122"/>
        <dbReference type="ChEBI" id="CHEBI:173083"/>
        <dbReference type="EC" id="4.1.3.3"/>
    </reaction>
</comment>
<comment type="pathway">
    <text evidence="1">Amino-sugar metabolism; N-acetylneuraminate degradation; D-fructose 6-phosphate from N-acetylneuraminate: step 1/5.</text>
</comment>
<comment type="subunit">
    <text evidence="1">Homotetramer.</text>
</comment>
<comment type="subcellular location">
    <subcellularLocation>
        <location evidence="1">Cytoplasm</location>
    </subcellularLocation>
</comment>
<comment type="similarity">
    <text evidence="1">Belongs to the DapA family. NanA subfamily.</text>
</comment>
<dbReference type="EC" id="4.1.3.3" evidence="1"/>
<dbReference type="EMBL" id="CP000255">
    <property type="protein sequence ID" value="ABD22640.1"/>
    <property type="molecule type" value="Genomic_DNA"/>
</dbReference>
<dbReference type="RefSeq" id="WP_001030738.1">
    <property type="nucleotide sequence ID" value="NZ_CP027476.1"/>
</dbReference>
<dbReference type="SMR" id="Q2FJU9"/>
<dbReference type="KEGG" id="saa:SAUSA300_0315"/>
<dbReference type="HOGENOM" id="CLU_049343_5_1_9"/>
<dbReference type="OMA" id="WCTAAPC"/>
<dbReference type="UniPathway" id="UPA00629">
    <property type="reaction ID" value="UER00680"/>
</dbReference>
<dbReference type="Proteomes" id="UP000001939">
    <property type="component" value="Chromosome"/>
</dbReference>
<dbReference type="GO" id="GO:0005829">
    <property type="term" value="C:cytosol"/>
    <property type="evidence" value="ECO:0007669"/>
    <property type="project" value="TreeGrafter"/>
</dbReference>
<dbReference type="GO" id="GO:0008747">
    <property type="term" value="F:N-acetylneuraminate lyase activity"/>
    <property type="evidence" value="ECO:0007669"/>
    <property type="project" value="UniProtKB-UniRule"/>
</dbReference>
<dbReference type="GO" id="GO:0005975">
    <property type="term" value="P:carbohydrate metabolic process"/>
    <property type="evidence" value="ECO:0007669"/>
    <property type="project" value="UniProtKB-UniRule"/>
</dbReference>
<dbReference type="GO" id="GO:0019262">
    <property type="term" value="P:N-acetylneuraminate catabolic process"/>
    <property type="evidence" value="ECO:0007669"/>
    <property type="project" value="UniProtKB-UniRule"/>
</dbReference>
<dbReference type="CDD" id="cd00954">
    <property type="entry name" value="NAL"/>
    <property type="match status" value="1"/>
</dbReference>
<dbReference type="FunFam" id="3.20.20.70:FF:000039">
    <property type="entry name" value="N-acetylneuraminate lyase"/>
    <property type="match status" value="1"/>
</dbReference>
<dbReference type="Gene3D" id="3.20.20.70">
    <property type="entry name" value="Aldolase class I"/>
    <property type="match status" value="1"/>
</dbReference>
<dbReference type="HAMAP" id="MF_01237">
    <property type="entry name" value="N_acetylneuram_lyase"/>
    <property type="match status" value="1"/>
</dbReference>
<dbReference type="InterPro" id="IPR013785">
    <property type="entry name" value="Aldolase_TIM"/>
</dbReference>
<dbReference type="InterPro" id="IPR002220">
    <property type="entry name" value="DapA-like"/>
</dbReference>
<dbReference type="InterPro" id="IPR005264">
    <property type="entry name" value="NanA"/>
</dbReference>
<dbReference type="InterPro" id="IPR020625">
    <property type="entry name" value="Schiff_base-form_aldolases_AS"/>
</dbReference>
<dbReference type="NCBIfam" id="NF003164">
    <property type="entry name" value="PRK04147.1"/>
    <property type="match status" value="1"/>
</dbReference>
<dbReference type="PANTHER" id="PTHR42849">
    <property type="entry name" value="N-ACETYLNEURAMINATE LYASE"/>
    <property type="match status" value="1"/>
</dbReference>
<dbReference type="PANTHER" id="PTHR42849:SF1">
    <property type="entry name" value="N-ACETYLNEURAMINATE LYASE"/>
    <property type="match status" value="1"/>
</dbReference>
<dbReference type="Pfam" id="PF00701">
    <property type="entry name" value="DHDPS"/>
    <property type="match status" value="1"/>
</dbReference>
<dbReference type="PIRSF" id="PIRSF001365">
    <property type="entry name" value="DHDPS"/>
    <property type="match status" value="1"/>
</dbReference>
<dbReference type="PRINTS" id="PR00146">
    <property type="entry name" value="DHPICSNTHASE"/>
</dbReference>
<dbReference type="SMART" id="SM01130">
    <property type="entry name" value="DHDPS"/>
    <property type="match status" value="1"/>
</dbReference>
<dbReference type="SUPFAM" id="SSF51569">
    <property type="entry name" value="Aldolase"/>
    <property type="match status" value="1"/>
</dbReference>
<dbReference type="PROSITE" id="PS00666">
    <property type="entry name" value="DHDPS_2"/>
    <property type="match status" value="1"/>
</dbReference>
<gene>
    <name evidence="1" type="primary">nanA</name>
    <name type="ordered locus">SAUSA300_0315</name>
</gene>
<keyword id="KW-0119">Carbohydrate metabolism</keyword>
<keyword id="KW-0963">Cytoplasm</keyword>
<keyword id="KW-0456">Lyase</keyword>
<keyword id="KW-0704">Schiff base</keyword>
<reference key="1">
    <citation type="journal article" date="2006" name="Lancet">
        <title>Complete genome sequence of USA300, an epidemic clone of community-acquired meticillin-resistant Staphylococcus aureus.</title>
        <authorList>
            <person name="Diep B.A."/>
            <person name="Gill S.R."/>
            <person name="Chang R.F."/>
            <person name="Phan T.H."/>
            <person name="Chen J.H."/>
            <person name="Davidson M.G."/>
            <person name="Lin F."/>
            <person name="Lin J."/>
            <person name="Carleton H.A."/>
            <person name="Mongodin E.F."/>
            <person name="Sensabaugh G.F."/>
            <person name="Perdreau-Remington F."/>
        </authorList>
    </citation>
    <scope>NUCLEOTIDE SEQUENCE [LARGE SCALE GENOMIC DNA]</scope>
    <source>
        <strain>USA300</strain>
    </source>
</reference>
<feature type="chain" id="PRO_1000066937" description="N-acetylneuraminate lyase">
    <location>
        <begin position="1"/>
        <end position="293"/>
    </location>
</feature>
<feature type="active site" description="Proton donor" evidence="1">
    <location>
        <position position="137"/>
    </location>
</feature>
<feature type="active site" description="Schiff-base intermediate with substrate" evidence="1">
    <location>
        <position position="165"/>
    </location>
</feature>
<feature type="binding site" evidence="1">
    <location>
        <position position="48"/>
    </location>
    <ligand>
        <name>aceneuramate</name>
        <dbReference type="ChEBI" id="CHEBI:173083"/>
    </ligand>
</feature>
<feature type="binding site" evidence="1">
    <location>
        <position position="49"/>
    </location>
    <ligand>
        <name>aceneuramate</name>
        <dbReference type="ChEBI" id="CHEBI:173083"/>
    </ligand>
</feature>
<feature type="binding site" evidence="1">
    <location>
        <position position="167"/>
    </location>
    <ligand>
        <name>aceneuramate</name>
        <dbReference type="ChEBI" id="CHEBI:173083"/>
    </ligand>
</feature>
<feature type="binding site" evidence="1">
    <location>
        <position position="189"/>
    </location>
    <ligand>
        <name>aceneuramate</name>
        <dbReference type="ChEBI" id="CHEBI:173083"/>
    </ligand>
</feature>
<feature type="binding site" evidence="1">
    <location>
        <position position="191"/>
    </location>
    <ligand>
        <name>aceneuramate</name>
        <dbReference type="ChEBI" id="CHEBI:173083"/>
    </ligand>
</feature>
<feature type="binding site" evidence="1">
    <location>
        <position position="192"/>
    </location>
    <ligand>
        <name>aceneuramate</name>
        <dbReference type="ChEBI" id="CHEBI:173083"/>
    </ligand>
</feature>
<feature type="binding site" evidence="1">
    <location>
        <position position="208"/>
    </location>
    <ligand>
        <name>aceneuramate</name>
        <dbReference type="ChEBI" id="CHEBI:173083"/>
    </ligand>
</feature>
<protein>
    <recommendedName>
        <fullName evidence="1">N-acetylneuraminate lyase</fullName>
        <shortName evidence="1">NAL</shortName>
        <shortName evidence="1">Neu5Ac lyase</shortName>
        <ecNumber evidence="1">4.1.3.3</ecNumber>
    </recommendedName>
    <alternativeName>
        <fullName evidence="1">N-acetylneuraminate pyruvate-lyase</fullName>
    </alternativeName>
    <alternativeName>
        <fullName evidence="1">N-acetylneuraminic acid aldolase</fullName>
    </alternativeName>
    <alternativeName>
        <fullName evidence="1">Sialate lyase</fullName>
    </alternativeName>
    <alternativeName>
        <fullName evidence="1">Sialic acid aldolase</fullName>
    </alternativeName>
    <alternativeName>
        <fullName evidence="1">Sialic acid lyase</fullName>
    </alternativeName>
</protein>
<accession>Q2FJU9</accession>
<evidence type="ECO:0000255" key="1">
    <source>
        <dbReference type="HAMAP-Rule" id="MF_01237"/>
    </source>
</evidence>
<sequence>MNKDLKGLYAALLVPFDENGQVNEQGLKQIAQNAIETEELDGLYVNGSSGENFLLNTEQKKQVFKVAKEAVGDKVKLIAQVGSLDLNEAIELGKYATELGYDALSAVTPFYYPFTFEEIRDYYFDIIEATQNNMIIYAIPDLTGVNISIEQFSELFNHEKIVGVKYTAPNFFLLERIRKAFPDKLILSGFDEMLVQATISGVDGAIGSTYNVNGRRARKIFDLARQGQIQEAYQLQHDSNDIIETVLSMGIYPTLKEILRHRGIDAGLPKRPFKPFNEAHRQTLDQLIAKYDL</sequence>
<organism>
    <name type="scientific">Staphylococcus aureus (strain USA300)</name>
    <dbReference type="NCBI Taxonomy" id="367830"/>
    <lineage>
        <taxon>Bacteria</taxon>
        <taxon>Bacillati</taxon>
        <taxon>Bacillota</taxon>
        <taxon>Bacilli</taxon>
        <taxon>Bacillales</taxon>
        <taxon>Staphylococcaceae</taxon>
        <taxon>Staphylococcus</taxon>
    </lineage>
</organism>
<proteinExistence type="inferred from homology"/>
<name>NANA_STAA3</name>